<comment type="function">
    <text evidence="1">Catalyzes the decarboxylation of S-adenosylmethionine to S-adenosylmethioninamine (dcAdoMet), the propylamine donor required for the synthesis of the polyamines spermine and spermidine from the diamine putrescine.</text>
</comment>
<comment type="catalytic activity">
    <reaction evidence="1">
        <text>S-adenosyl-L-methionine + H(+) = S-adenosyl 3-(methylsulfanyl)propylamine + CO2</text>
        <dbReference type="Rhea" id="RHEA:15981"/>
        <dbReference type="ChEBI" id="CHEBI:15378"/>
        <dbReference type="ChEBI" id="CHEBI:16526"/>
        <dbReference type="ChEBI" id="CHEBI:57443"/>
        <dbReference type="ChEBI" id="CHEBI:59789"/>
        <dbReference type="EC" id="4.1.1.50"/>
    </reaction>
</comment>
<comment type="cofactor">
    <cofactor evidence="1">
        <name>pyruvate</name>
        <dbReference type="ChEBI" id="CHEBI:15361"/>
    </cofactor>
    <text evidence="1">Binds 1 pyruvoyl group covalently per subunit.</text>
</comment>
<comment type="pathway">
    <text evidence="1">Amine and polyamine biosynthesis; S-adenosylmethioninamine biosynthesis; S-adenosylmethioninamine from S-adenosyl-L-methionine: step 1/1.</text>
</comment>
<comment type="subunit">
    <text evidence="1">Heterotetramer of two alpha and two beta chains arranged as a dimer of alpha/beta heterodimers.</text>
</comment>
<comment type="PTM">
    <text evidence="1">Is synthesized initially as an inactive proenzyme. Formation of the active enzyme involves a self-maturation process in which the active site pyruvoyl group is generated from an internal serine residue via an autocatalytic post-translational modification. Two non-identical subunits are generated from the proenzyme in this reaction, and the pyruvate is formed at the N-terminus of the alpha chain, which is derived from the carboxyl end of the proenzyme. The post-translation cleavage follows an unusual pathway, termed non-hydrolytic serinolysis, in which the side chain hydroxyl group of the serine supplies its oxygen atom to form the C-terminus of the beta chain, while the remainder of the serine residue undergoes an oxidative deamination to produce ammonia and the pyruvoyl group blocking the N-terminus of the alpha chain.</text>
</comment>
<comment type="similarity">
    <text evidence="1">Belongs to the prokaryotic AdoMetDC family. Type 1 subfamily.</text>
</comment>
<proteinExistence type="inferred from homology"/>
<feature type="chain" id="PRO_0000030111" description="S-adenosylmethionine decarboxylase beta chain" evidence="1">
    <location>
        <begin position="1"/>
        <end position="62"/>
    </location>
</feature>
<feature type="chain" id="PRO_0000030112" description="S-adenosylmethionine decarboxylase alpha chain" evidence="1">
    <location>
        <begin position="63"/>
        <end position="122"/>
    </location>
</feature>
<feature type="active site" description="Schiff-base intermediate with substrate; via pyruvic acid" evidence="1">
    <location>
        <position position="63"/>
    </location>
</feature>
<feature type="active site" description="Proton acceptor; for processing activity" evidence="1">
    <location>
        <position position="68"/>
    </location>
</feature>
<feature type="active site" description="Proton donor; for catalytic activity" evidence="1">
    <location>
        <position position="83"/>
    </location>
</feature>
<feature type="site" description="Cleavage (non-hydrolytic); by autolysis" evidence="1">
    <location>
        <begin position="62"/>
        <end position="63"/>
    </location>
</feature>
<feature type="modified residue" description="Pyruvic acid (Ser); by autocatalysis" evidence="1">
    <location>
        <position position="63"/>
    </location>
</feature>
<evidence type="ECO:0000255" key="1">
    <source>
        <dbReference type="HAMAP-Rule" id="MF_00464"/>
    </source>
</evidence>
<sequence>MKQLGKHIILELWGCESQALDDQPGIEKMLVNAVKACGATLICVKTHKFSPQGVTGVAVLSESHISIHTWPELGYAAMDVFTCGEHVKPEDTIPEIEKFLKPEKTEVMDIKRGIIDDGEVKE</sequence>
<organism>
    <name type="scientific">Methanococcus maripaludis (strain DSM 14266 / JCM 13030 / NBRC 101832 / S2 / LL)</name>
    <dbReference type="NCBI Taxonomy" id="267377"/>
    <lineage>
        <taxon>Archaea</taxon>
        <taxon>Methanobacteriati</taxon>
        <taxon>Methanobacteriota</taxon>
        <taxon>Methanomada group</taxon>
        <taxon>Methanococci</taxon>
        <taxon>Methanococcales</taxon>
        <taxon>Methanococcaceae</taxon>
        <taxon>Methanococcus</taxon>
    </lineage>
</organism>
<reference key="1">
    <citation type="journal article" date="2004" name="J. Bacteriol.">
        <title>Complete genome sequence of the genetically tractable hydrogenotrophic methanogen Methanococcus maripaludis.</title>
        <authorList>
            <person name="Hendrickson E.L."/>
            <person name="Kaul R."/>
            <person name="Zhou Y."/>
            <person name="Bovee D."/>
            <person name="Chapman P."/>
            <person name="Chung J."/>
            <person name="Conway de Macario E."/>
            <person name="Dodsworth J.A."/>
            <person name="Gillett W."/>
            <person name="Graham D.E."/>
            <person name="Hackett M."/>
            <person name="Haydock A.K."/>
            <person name="Kang A."/>
            <person name="Land M.L."/>
            <person name="Levy R."/>
            <person name="Lie T.J."/>
            <person name="Major T.A."/>
            <person name="Moore B.C."/>
            <person name="Porat I."/>
            <person name="Palmeiri A."/>
            <person name="Rouse G."/>
            <person name="Saenphimmachak C."/>
            <person name="Soell D."/>
            <person name="Van Dien S."/>
            <person name="Wang T."/>
            <person name="Whitman W.B."/>
            <person name="Xia Q."/>
            <person name="Zhang Y."/>
            <person name="Larimer F.W."/>
            <person name="Olson M.V."/>
            <person name="Leigh J.A."/>
        </authorList>
    </citation>
    <scope>NUCLEOTIDE SEQUENCE [LARGE SCALE GENOMIC DNA]</scope>
    <source>
        <strain>DSM 14266 / JCM 13030 / NBRC 101832 / S2 / LL</strain>
    </source>
</reference>
<name>SPEH_METMP</name>
<accession>Q6LWX1</accession>
<dbReference type="EC" id="4.1.1.50" evidence="1"/>
<dbReference type="EMBL" id="BX950229">
    <property type="protein sequence ID" value="CAF31139.1"/>
    <property type="molecule type" value="Genomic_DNA"/>
</dbReference>
<dbReference type="RefSeq" id="WP_011171527.1">
    <property type="nucleotide sequence ID" value="NC_005791.1"/>
</dbReference>
<dbReference type="SMR" id="Q6LWX1"/>
<dbReference type="STRING" id="267377.MMP1583"/>
<dbReference type="EnsemblBacteria" id="CAF31139">
    <property type="protein sequence ID" value="CAF31139"/>
    <property type="gene ID" value="MMP1583"/>
</dbReference>
<dbReference type="GeneID" id="10983164"/>
<dbReference type="GeneID" id="2761958"/>
<dbReference type="KEGG" id="mmp:MMP1583"/>
<dbReference type="PATRIC" id="fig|267377.15.peg.1622"/>
<dbReference type="eggNOG" id="arCOG00279">
    <property type="taxonomic scope" value="Archaea"/>
</dbReference>
<dbReference type="HOGENOM" id="CLU_125470_2_3_2"/>
<dbReference type="OrthoDB" id="114016at2157"/>
<dbReference type="UniPathway" id="UPA00331">
    <property type="reaction ID" value="UER00451"/>
</dbReference>
<dbReference type="Proteomes" id="UP000000590">
    <property type="component" value="Chromosome"/>
</dbReference>
<dbReference type="GO" id="GO:0005829">
    <property type="term" value="C:cytosol"/>
    <property type="evidence" value="ECO:0007669"/>
    <property type="project" value="TreeGrafter"/>
</dbReference>
<dbReference type="GO" id="GO:0004014">
    <property type="term" value="F:adenosylmethionine decarboxylase activity"/>
    <property type="evidence" value="ECO:0007669"/>
    <property type="project" value="UniProtKB-UniRule"/>
</dbReference>
<dbReference type="GO" id="GO:0008295">
    <property type="term" value="P:spermidine biosynthetic process"/>
    <property type="evidence" value="ECO:0007669"/>
    <property type="project" value="UniProtKB-UniRule"/>
</dbReference>
<dbReference type="FunFam" id="3.30.360.110:FF:000001">
    <property type="entry name" value="S-adenosylmethionine decarboxylase proenzyme"/>
    <property type="match status" value="1"/>
</dbReference>
<dbReference type="Gene3D" id="3.30.160.750">
    <property type="match status" value="1"/>
</dbReference>
<dbReference type="Gene3D" id="3.30.360.110">
    <property type="entry name" value="S-adenosylmethionine decarboxylase domain"/>
    <property type="match status" value="1"/>
</dbReference>
<dbReference type="HAMAP" id="MF_00464">
    <property type="entry name" value="AdoMetDC_1"/>
    <property type="match status" value="1"/>
</dbReference>
<dbReference type="InterPro" id="IPR042286">
    <property type="entry name" value="AdoMetDC_C"/>
</dbReference>
<dbReference type="InterPro" id="IPR003826">
    <property type="entry name" value="AdoMetDC_fam_prok"/>
</dbReference>
<dbReference type="InterPro" id="IPR042284">
    <property type="entry name" value="AdoMetDC_N"/>
</dbReference>
<dbReference type="InterPro" id="IPR016067">
    <property type="entry name" value="S-AdoMet_deCO2ase_core"/>
</dbReference>
<dbReference type="InterPro" id="IPR017716">
    <property type="entry name" value="S-AdoMet_deCOase_pro-enz"/>
</dbReference>
<dbReference type="NCBIfam" id="TIGR03330">
    <property type="entry name" value="SAM_DCase_Bsu"/>
    <property type="match status" value="1"/>
</dbReference>
<dbReference type="PANTHER" id="PTHR33866">
    <property type="entry name" value="S-ADENOSYLMETHIONINE DECARBOXYLASE PROENZYME"/>
    <property type="match status" value="1"/>
</dbReference>
<dbReference type="PANTHER" id="PTHR33866:SF2">
    <property type="entry name" value="S-ADENOSYLMETHIONINE DECARBOXYLASE PROENZYME"/>
    <property type="match status" value="1"/>
</dbReference>
<dbReference type="Pfam" id="PF02675">
    <property type="entry name" value="AdoMet_dc"/>
    <property type="match status" value="1"/>
</dbReference>
<dbReference type="SUPFAM" id="SSF56276">
    <property type="entry name" value="S-adenosylmethionine decarboxylase"/>
    <property type="match status" value="1"/>
</dbReference>
<keyword id="KW-0068">Autocatalytic cleavage</keyword>
<keyword id="KW-0210">Decarboxylase</keyword>
<keyword id="KW-0456">Lyase</keyword>
<keyword id="KW-0620">Polyamine biosynthesis</keyword>
<keyword id="KW-0670">Pyruvate</keyword>
<keyword id="KW-1185">Reference proteome</keyword>
<keyword id="KW-0949">S-adenosyl-L-methionine</keyword>
<keyword id="KW-0704">Schiff base</keyword>
<keyword id="KW-0745">Spermidine biosynthesis</keyword>
<keyword id="KW-0865">Zymogen</keyword>
<protein>
    <recommendedName>
        <fullName evidence="1">S-adenosylmethionine decarboxylase proenzyme</fullName>
        <shortName evidence="1">AdoMetDC</shortName>
        <shortName evidence="1">SAMDC</shortName>
        <ecNumber evidence="1">4.1.1.50</ecNumber>
    </recommendedName>
    <component>
        <recommendedName>
            <fullName evidence="1">S-adenosylmethionine decarboxylase beta chain</fullName>
        </recommendedName>
    </component>
    <component>
        <recommendedName>
            <fullName evidence="1">S-adenosylmethionine decarboxylase alpha chain</fullName>
        </recommendedName>
    </component>
</protein>
<gene>
    <name evidence="1" type="primary">speH</name>
    <name type="ordered locus">MMP1583</name>
</gene>